<comment type="function">
    <text evidence="1">Catalyzes the synthesis of beta-nicotinate D-ribonucleotide from nicotinate and 5-phospho-D-ribose 1-phosphate at the expense of ATP.</text>
</comment>
<comment type="catalytic activity">
    <reaction evidence="1">
        <text>nicotinate + 5-phospho-alpha-D-ribose 1-diphosphate + ATP + H2O = nicotinate beta-D-ribonucleotide + ADP + phosphate + diphosphate</text>
        <dbReference type="Rhea" id="RHEA:36163"/>
        <dbReference type="ChEBI" id="CHEBI:15377"/>
        <dbReference type="ChEBI" id="CHEBI:30616"/>
        <dbReference type="ChEBI" id="CHEBI:32544"/>
        <dbReference type="ChEBI" id="CHEBI:33019"/>
        <dbReference type="ChEBI" id="CHEBI:43474"/>
        <dbReference type="ChEBI" id="CHEBI:57502"/>
        <dbReference type="ChEBI" id="CHEBI:58017"/>
        <dbReference type="ChEBI" id="CHEBI:456216"/>
        <dbReference type="EC" id="6.3.4.21"/>
    </reaction>
</comment>
<comment type="pathway">
    <text evidence="1">Cofactor biosynthesis; NAD(+) biosynthesis; nicotinate D-ribonucleotide from nicotinate: step 1/1.</text>
</comment>
<comment type="PTM">
    <text evidence="1">Transiently phosphorylated on a His residue during the reaction cycle. Phosphorylation strongly increases the affinity for substrates and increases the rate of nicotinate D-ribonucleotide production. Dephosphorylation regenerates the low-affinity form of the enzyme, leading to product release.</text>
</comment>
<comment type="similarity">
    <text evidence="1">Belongs to the NAPRTase family.</text>
</comment>
<accession>B4T172</accession>
<keyword id="KW-0436">Ligase</keyword>
<keyword id="KW-0597">Phosphoprotein</keyword>
<keyword id="KW-0662">Pyridine nucleotide biosynthesis</keyword>
<name>PNCB_SALNS</name>
<feature type="chain" id="PRO_1000129487" description="Nicotinate phosphoribosyltransferase">
    <location>
        <begin position="1"/>
        <end position="400"/>
    </location>
</feature>
<feature type="modified residue" description="Phosphohistidine; by autocatalysis" evidence="1">
    <location>
        <position position="220"/>
    </location>
</feature>
<organism>
    <name type="scientific">Salmonella newport (strain SL254)</name>
    <dbReference type="NCBI Taxonomy" id="423368"/>
    <lineage>
        <taxon>Bacteria</taxon>
        <taxon>Pseudomonadati</taxon>
        <taxon>Pseudomonadota</taxon>
        <taxon>Gammaproteobacteria</taxon>
        <taxon>Enterobacterales</taxon>
        <taxon>Enterobacteriaceae</taxon>
        <taxon>Salmonella</taxon>
    </lineage>
</organism>
<protein>
    <recommendedName>
        <fullName evidence="1">Nicotinate phosphoribosyltransferase</fullName>
        <shortName evidence="1">NAPRTase</shortName>
        <ecNumber evidence="1">6.3.4.21</ecNumber>
    </recommendedName>
</protein>
<evidence type="ECO:0000255" key="1">
    <source>
        <dbReference type="HAMAP-Rule" id="MF_00570"/>
    </source>
</evidence>
<reference key="1">
    <citation type="journal article" date="2011" name="J. Bacteriol.">
        <title>Comparative genomics of 28 Salmonella enterica isolates: evidence for CRISPR-mediated adaptive sublineage evolution.</title>
        <authorList>
            <person name="Fricke W.F."/>
            <person name="Mammel M.K."/>
            <person name="McDermott P.F."/>
            <person name="Tartera C."/>
            <person name="White D.G."/>
            <person name="Leclerc J.E."/>
            <person name="Ravel J."/>
            <person name="Cebula T.A."/>
        </authorList>
    </citation>
    <scope>NUCLEOTIDE SEQUENCE [LARGE SCALE GENOMIC DNA]</scope>
    <source>
        <strain>SL254</strain>
    </source>
</reference>
<dbReference type="EC" id="6.3.4.21" evidence="1"/>
<dbReference type="EMBL" id="CP001113">
    <property type="protein sequence ID" value="ACF65282.1"/>
    <property type="molecule type" value="Genomic_DNA"/>
</dbReference>
<dbReference type="RefSeq" id="WP_000191406.1">
    <property type="nucleotide sequence ID" value="NZ_CCMR01000003.1"/>
</dbReference>
<dbReference type="SMR" id="B4T172"/>
<dbReference type="KEGG" id="see:SNSL254_A1041"/>
<dbReference type="HOGENOM" id="CLU_030991_1_0_6"/>
<dbReference type="UniPathway" id="UPA00253">
    <property type="reaction ID" value="UER00457"/>
</dbReference>
<dbReference type="Proteomes" id="UP000008824">
    <property type="component" value="Chromosome"/>
</dbReference>
<dbReference type="GO" id="GO:0005829">
    <property type="term" value="C:cytosol"/>
    <property type="evidence" value="ECO:0007669"/>
    <property type="project" value="TreeGrafter"/>
</dbReference>
<dbReference type="GO" id="GO:0004516">
    <property type="term" value="F:nicotinate phosphoribosyltransferase activity"/>
    <property type="evidence" value="ECO:0007669"/>
    <property type="project" value="UniProtKB-UniRule"/>
</dbReference>
<dbReference type="GO" id="GO:0034355">
    <property type="term" value="P:NAD biosynthetic process via the salvage pathway"/>
    <property type="evidence" value="ECO:0007669"/>
    <property type="project" value="TreeGrafter"/>
</dbReference>
<dbReference type="CDD" id="cd01401">
    <property type="entry name" value="PncB_like"/>
    <property type="match status" value="1"/>
</dbReference>
<dbReference type="FunFam" id="3.20.140.10:FF:000001">
    <property type="entry name" value="Nicotinate phosphoribosyltransferase"/>
    <property type="match status" value="1"/>
</dbReference>
<dbReference type="Gene3D" id="3.20.140.10">
    <property type="entry name" value="nicotinate phosphoribosyltransferase"/>
    <property type="match status" value="1"/>
</dbReference>
<dbReference type="HAMAP" id="MF_00570">
    <property type="entry name" value="NAPRTase"/>
    <property type="match status" value="1"/>
</dbReference>
<dbReference type="InterPro" id="IPR041525">
    <property type="entry name" value="N/Namide_PRibTrfase"/>
</dbReference>
<dbReference type="InterPro" id="IPR040727">
    <property type="entry name" value="NAPRTase_N"/>
</dbReference>
<dbReference type="InterPro" id="IPR006406">
    <property type="entry name" value="Nic_PRibTrfase"/>
</dbReference>
<dbReference type="InterPro" id="IPR007229">
    <property type="entry name" value="Nic_PRibTrfase-Fam"/>
</dbReference>
<dbReference type="InterPro" id="IPR036068">
    <property type="entry name" value="Nicotinate_pribotase-like_C"/>
</dbReference>
<dbReference type="NCBIfam" id="TIGR01514">
    <property type="entry name" value="NAPRTase"/>
    <property type="match status" value="1"/>
</dbReference>
<dbReference type="NCBIfam" id="NF003704">
    <property type="entry name" value="PRK05321.1"/>
    <property type="match status" value="1"/>
</dbReference>
<dbReference type="PANTHER" id="PTHR11098">
    <property type="entry name" value="NICOTINATE PHOSPHORIBOSYLTRANSFERASE"/>
    <property type="match status" value="1"/>
</dbReference>
<dbReference type="PANTHER" id="PTHR11098:SF1">
    <property type="entry name" value="NICOTINATE PHOSPHORIBOSYLTRANSFERASE"/>
    <property type="match status" value="1"/>
</dbReference>
<dbReference type="Pfam" id="PF04095">
    <property type="entry name" value="NAPRTase"/>
    <property type="match status" value="1"/>
</dbReference>
<dbReference type="Pfam" id="PF17767">
    <property type="entry name" value="NAPRTase_N"/>
    <property type="match status" value="1"/>
</dbReference>
<dbReference type="PIRSF" id="PIRSF000484">
    <property type="entry name" value="NAPRT"/>
    <property type="match status" value="1"/>
</dbReference>
<dbReference type="SUPFAM" id="SSF51690">
    <property type="entry name" value="Nicotinate/Quinolinate PRTase C-terminal domain-like"/>
    <property type="match status" value="1"/>
</dbReference>
<dbReference type="SUPFAM" id="SSF54675">
    <property type="entry name" value="Nicotinate/Quinolinate PRTase N-terminal domain-like"/>
    <property type="match status" value="1"/>
</dbReference>
<proteinExistence type="inferred from homology"/>
<sequence length="400" mass="45707">MTQFASPVLHSLLDTDAYKLHMQQAVFHHYYDVQVAAEFRCRGDDLLGIYADAIREQVDAMQHLRLQEDEFQWLSGLPFFKPDYLNWLREFRYNPAQVCVTNDNGKLNIRLTGPWREVIMWEVPLLAVISELVHHYRSPNAGVDQALDALESKLVDFTALTANLDMSRFHLMDFGTRRRFSREVQQAIVKRLQQESWFVGTSNYDLARRLALTPMGTQAHEWFQAHQQISPDLATSQRAALAAWLNEYPDQLGIALTDCITMDAFLRDFGIEFASRYQGLRHDSGDPVAWGEKAIAHYEKLGIDPLTKTLVFSDNLDLQKAVELYRHFASRVQLSFGIGTRLTCDIPQVKPLNIVIKLVECNGKPVAKLSDSPGKTICHDKAFVRALRKAFDLPQVRKAS</sequence>
<gene>
    <name evidence="1" type="primary">pncB</name>
    <name type="ordered locus">SNSL254_A1041</name>
</gene>